<reference key="1">
    <citation type="submission" date="2006-08" db="EMBL/GenBank/DDBJ databases">
        <title>Complete sequence of chromosome 1 of Burkholderia cenocepacia HI2424.</title>
        <authorList>
            <person name="Copeland A."/>
            <person name="Lucas S."/>
            <person name="Lapidus A."/>
            <person name="Barry K."/>
            <person name="Detter J.C."/>
            <person name="Glavina del Rio T."/>
            <person name="Hammon N."/>
            <person name="Israni S."/>
            <person name="Pitluck S."/>
            <person name="Chain P."/>
            <person name="Malfatti S."/>
            <person name="Shin M."/>
            <person name="Vergez L."/>
            <person name="Schmutz J."/>
            <person name="Larimer F."/>
            <person name="Land M."/>
            <person name="Hauser L."/>
            <person name="Kyrpides N."/>
            <person name="Kim E."/>
            <person name="LiPuma J.J."/>
            <person name="Gonzalez C.F."/>
            <person name="Konstantinidis K."/>
            <person name="Tiedje J.M."/>
            <person name="Richardson P."/>
        </authorList>
    </citation>
    <scope>NUCLEOTIDE SEQUENCE [LARGE SCALE GENOMIC DNA]</scope>
    <source>
        <strain>HI2424</strain>
    </source>
</reference>
<keyword id="KW-0067">ATP-binding</keyword>
<keyword id="KW-0963">Cytoplasm</keyword>
<keyword id="KW-1015">Disulfide bond</keyword>
<keyword id="KW-0547">Nucleotide-binding</keyword>
<keyword id="KW-0694">RNA-binding</keyword>
<keyword id="KW-0808">Transferase</keyword>
<keyword id="KW-0819">tRNA processing</keyword>
<keyword id="KW-0820">tRNA-binding</keyword>
<gene>
    <name evidence="1" type="primary">mnmA</name>
    <name type="ordered locus">Bcen2424_0698</name>
</gene>
<name>MNMA_BURCH</name>
<feature type="chain" id="PRO_0000349551" description="tRNA-specific 2-thiouridylase MnmA">
    <location>
        <begin position="1"/>
        <end position="391"/>
    </location>
</feature>
<feature type="region of interest" description="Interaction with target base in tRNA" evidence="1">
    <location>
        <begin position="95"/>
        <end position="97"/>
    </location>
</feature>
<feature type="region of interest" description="Interaction with tRNA" evidence="1">
    <location>
        <begin position="146"/>
        <end position="148"/>
    </location>
</feature>
<feature type="region of interest" description="Interaction with tRNA" evidence="1">
    <location>
        <begin position="308"/>
        <end position="309"/>
    </location>
</feature>
<feature type="active site" description="Nucleophile" evidence="1">
    <location>
        <position position="100"/>
    </location>
</feature>
<feature type="active site" description="Cysteine persulfide intermediate" evidence="1">
    <location>
        <position position="196"/>
    </location>
</feature>
<feature type="binding site" evidence="1">
    <location>
        <begin position="9"/>
        <end position="16"/>
    </location>
    <ligand>
        <name>ATP</name>
        <dbReference type="ChEBI" id="CHEBI:30616"/>
    </ligand>
</feature>
<feature type="binding site" evidence="1">
    <location>
        <position position="35"/>
    </location>
    <ligand>
        <name>ATP</name>
        <dbReference type="ChEBI" id="CHEBI:30616"/>
    </ligand>
</feature>
<feature type="binding site" evidence="1">
    <location>
        <position position="124"/>
    </location>
    <ligand>
        <name>ATP</name>
        <dbReference type="ChEBI" id="CHEBI:30616"/>
    </ligand>
</feature>
<feature type="site" description="Interaction with tRNA" evidence="1">
    <location>
        <position position="125"/>
    </location>
</feature>
<feature type="site" description="Interaction with tRNA" evidence="1">
    <location>
        <position position="351"/>
    </location>
</feature>
<feature type="disulfide bond" description="Alternate" evidence="1">
    <location>
        <begin position="100"/>
        <end position="196"/>
    </location>
</feature>
<organism>
    <name type="scientific">Burkholderia cenocepacia (strain HI2424)</name>
    <dbReference type="NCBI Taxonomy" id="331272"/>
    <lineage>
        <taxon>Bacteria</taxon>
        <taxon>Pseudomonadati</taxon>
        <taxon>Pseudomonadota</taxon>
        <taxon>Betaproteobacteria</taxon>
        <taxon>Burkholderiales</taxon>
        <taxon>Burkholderiaceae</taxon>
        <taxon>Burkholderia</taxon>
        <taxon>Burkholderia cepacia complex</taxon>
    </lineage>
</organism>
<accession>A0K4M4</accession>
<sequence>MSKRRVVVGMSGGVDSSVTAWLLKEQGYDVVGLFMKNWEDDDDGEYCSTRQDWIDVVSVADLIGIDVEAVNFAAEYKDRVFAEFLREYSAGRTPNPDVLCNAEIKFKAFLDHAMSLDAEMIATGHYARVRERDGRFELLKAFDHTKDQSYFLHRLNQAQLSKTMFPLGEIPKTKVREIAAQIGLPNAKKKDSTGICFIGERPFRDFLNRYLPTKPGPMKTPDGKVVGEHIGLAFYTFGQRKGIGLGGSKSGSGEPWFVAAKDIASNTLYVVQGHDHPWLLSRELVAGNVSWVAGEPPADGFACGAKTRYRQADAACVFGGAATGAAAAGPAGEVRFSLAFDDAQWAVTPGQSAVLYDGEICLGGGIIESAATGQPGQATSAGHAPALAEAR</sequence>
<dbReference type="EC" id="2.8.1.13" evidence="1"/>
<dbReference type="EMBL" id="CP000458">
    <property type="protein sequence ID" value="ABK07451.1"/>
    <property type="molecule type" value="Genomic_DNA"/>
</dbReference>
<dbReference type="RefSeq" id="WP_011544604.1">
    <property type="nucleotide sequence ID" value="NC_008542.1"/>
</dbReference>
<dbReference type="SMR" id="A0K4M4"/>
<dbReference type="KEGG" id="bch:Bcen2424_0698"/>
<dbReference type="HOGENOM" id="CLU_035188_1_0_4"/>
<dbReference type="GO" id="GO:0005737">
    <property type="term" value="C:cytoplasm"/>
    <property type="evidence" value="ECO:0007669"/>
    <property type="project" value="UniProtKB-SubCell"/>
</dbReference>
<dbReference type="GO" id="GO:0005524">
    <property type="term" value="F:ATP binding"/>
    <property type="evidence" value="ECO:0007669"/>
    <property type="project" value="UniProtKB-KW"/>
</dbReference>
<dbReference type="GO" id="GO:0000049">
    <property type="term" value="F:tRNA binding"/>
    <property type="evidence" value="ECO:0007669"/>
    <property type="project" value="UniProtKB-KW"/>
</dbReference>
<dbReference type="GO" id="GO:0103016">
    <property type="term" value="F:tRNA-uridine 2-sulfurtransferase activity"/>
    <property type="evidence" value="ECO:0007669"/>
    <property type="project" value="UniProtKB-EC"/>
</dbReference>
<dbReference type="GO" id="GO:0002143">
    <property type="term" value="P:tRNA wobble position uridine thiolation"/>
    <property type="evidence" value="ECO:0007669"/>
    <property type="project" value="TreeGrafter"/>
</dbReference>
<dbReference type="CDD" id="cd01998">
    <property type="entry name" value="MnmA_TRMU-like"/>
    <property type="match status" value="1"/>
</dbReference>
<dbReference type="FunFam" id="2.30.30.280:FF:000001">
    <property type="entry name" value="tRNA-specific 2-thiouridylase MnmA"/>
    <property type="match status" value="1"/>
</dbReference>
<dbReference type="FunFam" id="2.40.30.10:FF:000023">
    <property type="entry name" value="tRNA-specific 2-thiouridylase MnmA"/>
    <property type="match status" value="1"/>
</dbReference>
<dbReference type="FunFam" id="3.40.50.620:FF:000004">
    <property type="entry name" value="tRNA-specific 2-thiouridylase MnmA"/>
    <property type="match status" value="1"/>
</dbReference>
<dbReference type="Gene3D" id="2.30.30.280">
    <property type="entry name" value="Adenine nucleotide alpha hydrolases-like domains"/>
    <property type="match status" value="1"/>
</dbReference>
<dbReference type="Gene3D" id="3.40.50.620">
    <property type="entry name" value="HUPs"/>
    <property type="match status" value="1"/>
</dbReference>
<dbReference type="Gene3D" id="2.40.30.10">
    <property type="entry name" value="Translation factors"/>
    <property type="match status" value="1"/>
</dbReference>
<dbReference type="HAMAP" id="MF_00144">
    <property type="entry name" value="tRNA_thiouridyl_MnmA"/>
    <property type="match status" value="1"/>
</dbReference>
<dbReference type="InterPro" id="IPR004506">
    <property type="entry name" value="MnmA-like"/>
</dbReference>
<dbReference type="InterPro" id="IPR046885">
    <property type="entry name" value="MnmA-like_C"/>
</dbReference>
<dbReference type="InterPro" id="IPR046884">
    <property type="entry name" value="MnmA-like_central"/>
</dbReference>
<dbReference type="InterPro" id="IPR023382">
    <property type="entry name" value="MnmA-like_central_sf"/>
</dbReference>
<dbReference type="InterPro" id="IPR014729">
    <property type="entry name" value="Rossmann-like_a/b/a_fold"/>
</dbReference>
<dbReference type="NCBIfam" id="NF001138">
    <property type="entry name" value="PRK00143.1"/>
    <property type="match status" value="1"/>
</dbReference>
<dbReference type="NCBIfam" id="TIGR00420">
    <property type="entry name" value="trmU"/>
    <property type="match status" value="1"/>
</dbReference>
<dbReference type="PANTHER" id="PTHR11933:SF5">
    <property type="entry name" value="MITOCHONDRIAL TRNA-SPECIFIC 2-THIOURIDYLASE 1"/>
    <property type="match status" value="1"/>
</dbReference>
<dbReference type="PANTHER" id="PTHR11933">
    <property type="entry name" value="TRNA 5-METHYLAMINOMETHYL-2-THIOURIDYLATE -METHYLTRANSFERASE"/>
    <property type="match status" value="1"/>
</dbReference>
<dbReference type="Pfam" id="PF03054">
    <property type="entry name" value="tRNA_Me_trans"/>
    <property type="match status" value="1"/>
</dbReference>
<dbReference type="Pfam" id="PF20258">
    <property type="entry name" value="tRNA_Me_trans_C"/>
    <property type="match status" value="1"/>
</dbReference>
<dbReference type="Pfam" id="PF20259">
    <property type="entry name" value="tRNA_Me_trans_M"/>
    <property type="match status" value="1"/>
</dbReference>
<dbReference type="SUPFAM" id="SSF52402">
    <property type="entry name" value="Adenine nucleotide alpha hydrolases-like"/>
    <property type="match status" value="1"/>
</dbReference>
<comment type="function">
    <text evidence="1">Catalyzes the 2-thiolation of uridine at the wobble position (U34) of tRNA, leading to the formation of s(2)U34.</text>
</comment>
<comment type="catalytic activity">
    <reaction evidence="1">
        <text>S-sulfanyl-L-cysteinyl-[protein] + uridine(34) in tRNA + AH2 + ATP = 2-thiouridine(34) in tRNA + L-cysteinyl-[protein] + A + AMP + diphosphate + H(+)</text>
        <dbReference type="Rhea" id="RHEA:47032"/>
        <dbReference type="Rhea" id="RHEA-COMP:10131"/>
        <dbReference type="Rhea" id="RHEA-COMP:11726"/>
        <dbReference type="Rhea" id="RHEA-COMP:11727"/>
        <dbReference type="Rhea" id="RHEA-COMP:11728"/>
        <dbReference type="ChEBI" id="CHEBI:13193"/>
        <dbReference type="ChEBI" id="CHEBI:15378"/>
        <dbReference type="ChEBI" id="CHEBI:17499"/>
        <dbReference type="ChEBI" id="CHEBI:29950"/>
        <dbReference type="ChEBI" id="CHEBI:30616"/>
        <dbReference type="ChEBI" id="CHEBI:33019"/>
        <dbReference type="ChEBI" id="CHEBI:61963"/>
        <dbReference type="ChEBI" id="CHEBI:65315"/>
        <dbReference type="ChEBI" id="CHEBI:87170"/>
        <dbReference type="ChEBI" id="CHEBI:456215"/>
        <dbReference type="EC" id="2.8.1.13"/>
    </reaction>
</comment>
<comment type="subcellular location">
    <subcellularLocation>
        <location evidence="1">Cytoplasm</location>
    </subcellularLocation>
</comment>
<comment type="similarity">
    <text evidence="1">Belongs to the MnmA/TRMU family.</text>
</comment>
<proteinExistence type="inferred from homology"/>
<evidence type="ECO:0000255" key="1">
    <source>
        <dbReference type="HAMAP-Rule" id="MF_00144"/>
    </source>
</evidence>
<protein>
    <recommendedName>
        <fullName evidence="1">tRNA-specific 2-thiouridylase MnmA</fullName>
        <ecNumber evidence="1">2.8.1.13</ecNumber>
    </recommendedName>
</protein>